<accession>C3PKQ2</accession>
<keyword id="KW-1185">Reference proteome</keyword>
<keyword id="KW-0687">Ribonucleoprotein</keyword>
<keyword id="KW-0689">Ribosomal protein</keyword>
<keyword id="KW-0694">RNA-binding</keyword>
<keyword id="KW-0699">rRNA-binding</keyword>
<organism>
    <name type="scientific">Corynebacterium aurimucosum (strain ATCC 700975 / DSM 44827 / CIP 107346 / CN-1)</name>
    <name type="common">Corynebacterium nigricans</name>
    <dbReference type="NCBI Taxonomy" id="548476"/>
    <lineage>
        <taxon>Bacteria</taxon>
        <taxon>Bacillati</taxon>
        <taxon>Actinomycetota</taxon>
        <taxon>Actinomycetes</taxon>
        <taxon>Mycobacteriales</taxon>
        <taxon>Corynebacteriaceae</taxon>
        <taxon>Corynebacterium</taxon>
    </lineage>
</organism>
<dbReference type="EMBL" id="CP001601">
    <property type="protein sequence ID" value="ACP31988.1"/>
    <property type="molecule type" value="Genomic_DNA"/>
</dbReference>
<dbReference type="RefSeq" id="WP_010189651.1">
    <property type="nucleotide sequence ID" value="NZ_ACLH01000066.1"/>
</dbReference>
<dbReference type="SMR" id="C3PKQ2"/>
<dbReference type="STRING" id="548476.cauri_0389"/>
<dbReference type="GeneID" id="31923008"/>
<dbReference type="KEGG" id="car:cauri_0389"/>
<dbReference type="eggNOG" id="COG0087">
    <property type="taxonomic scope" value="Bacteria"/>
</dbReference>
<dbReference type="HOGENOM" id="CLU_044142_4_1_11"/>
<dbReference type="OrthoDB" id="9806135at2"/>
<dbReference type="Proteomes" id="UP000002077">
    <property type="component" value="Chromosome"/>
</dbReference>
<dbReference type="GO" id="GO:0022625">
    <property type="term" value="C:cytosolic large ribosomal subunit"/>
    <property type="evidence" value="ECO:0007669"/>
    <property type="project" value="TreeGrafter"/>
</dbReference>
<dbReference type="GO" id="GO:0019843">
    <property type="term" value="F:rRNA binding"/>
    <property type="evidence" value="ECO:0007669"/>
    <property type="project" value="UniProtKB-UniRule"/>
</dbReference>
<dbReference type="GO" id="GO:0003735">
    <property type="term" value="F:structural constituent of ribosome"/>
    <property type="evidence" value="ECO:0007669"/>
    <property type="project" value="InterPro"/>
</dbReference>
<dbReference type="GO" id="GO:0006412">
    <property type="term" value="P:translation"/>
    <property type="evidence" value="ECO:0007669"/>
    <property type="project" value="UniProtKB-UniRule"/>
</dbReference>
<dbReference type="FunFam" id="2.40.30.10:FF:000004">
    <property type="entry name" value="50S ribosomal protein L3"/>
    <property type="match status" value="1"/>
</dbReference>
<dbReference type="FunFam" id="3.30.160.810:FF:000001">
    <property type="entry name" value="50S ribosomal protein L3"/>
    <property type="match status" value="1"/>
</dbReference>
<dbReference type="Gene3D" id="3.30.160.810">
    <property type="match status" value="1"/>
</dbReference>
<dbReference type="Gene3D" id="2.40.30.10">
    <property type="entry name" value="Translation factors"/>
    <property type="match status" value="1"/>
</dbReference>
<dbReference type="HAMAP" id="MF_01325_B">
    <property type="entry name" value="Ribosomal_uL3_B"/>
    <property type="match status" value="1"/>
</dbReference>
<dbReference type="InterPro" id="IPR000597">
    <property type="entry name" value="Ribosomal_uL3"/>
</dbReference>
<dbReference type="InterPro" id="IPR019927">
    <property type="entry name" value="Ribosomal_uL3_bac/org-type"/>
</dbReference>
<dbReference type="InterPro" id="IPR019926">
    <property type="entry name" value="Ribosomal_uL3_CS"/>
</dbReference>
<dbReference type="InterPro" id="IPR009000">
    <property type="entry name" value="Transl_B-barrel_sf"/>
</dbReference>
<dbReference type="NCBIfam" id="TIGR03625">
    <property type="entry name" value="L3_bact"/>
    <property type="match status" value="1"/>
</dbReference>
<dbReference type="PANTHER" id="PTHR11229">
    <property type="entry name" value="50S RIBOSOMAL PROTEIN L3"/>
    <property type="match status" value="1"/>
</dbReference>
<dbReference type="PANTHER" id="PTHR11229:SF16">
    <property type="entry name" value="LARGE RIBOSOMAL SUBUNIT PROTEIN UL3C"/>
    <property type="match status" value="1"/>
</dbReference>
<dbReference type="Pfam" id="PF00297">
    <property type="entry name" value="Ribosomal_L3"/>
    <property type="match status" value="1"/>
</dbReference>
<dbReference type="SUPFAM" id="SSF50447">
    <property type="entry name" value="Translation proteins"/>
    <property type="match status" value="1"/>
</dbReference>
<dbReference type="PROSITE" id="PS00474">
    <property type="entry name" value="RIBOSOMAL_L3"/>
    <property type="match status" value="1"/>
</dbReference>
<feature type="chain" id="PRO_1000165880" description="Large ribosomal subunit protein uL3">
    <location>
        <begin position="1"/>
        <end position="218"/>
    </location>
</feature>
<proteinExistence type="inferred from homology"/>
<gene>
    <name evidence="1" type="primary">rplC</name>
    <name type="ordered locus">cauri_0389</name>
</gene>
<comment type="function">
    <text evidence="1">One of the primary rRNA binding proteins, it binds directly near the 3'-end of the 23S rRNA, where it nucleates assembly of the 50S subunit.</text>
</comment>
<comment type="subunit">
    <text evidence="1">Part of the 50S ribosomal subunit. Forms a cluster with proteins L14 and L19.</text>
</comment>
<comment type="similarity">
    <text evidence="1">Belongs to the universal ribosomal protein uL3 family.</text>
</comment>
<evidence type="ECO:0000255" key="1">
    <source>
        <dbReference type="HAMAP-Rule" id="MF_01325"/>
    </source>
</evidence>
<evidence type="ECO:0000305" key="2"/>
<protein>
    <recommendedName>
        <fullName evidence="1">Large ribosomal subunit protein uL3</fullName>
    </recommendedName>
    <alternativeName>
        <fullName evidence="2">50S ribosomal protein L3</fullName>
    </alternativeName>
</protein>
<name>RL3_CORA7</name>
<reference key="1">
    <citation type="journal article" date="2010" name="BMC Genomics">
        <title>Complete genome sequence and lifestyle of black-pigmented Corynebacterium aurimucosum ATCC 700975 (formerly C. nigricans CN-1) isolated from a vaginal swab of a woman with spontaneous abortion.</title>
        <authorList>
            <person name="Trost E."/>
            <person name="Gotker S."/>
            <person name="Schneider J."/>
            <person name="Schneiker-Bekel S."/>
            <person name="Szczepanowski R."/>
            <person name="Tilker A."/>
            <person name="Viehoever P."/>
            <person name="Arnold W."/>
            <person name="Bekel T."/>
            <person name="Blom J."/>
            <person name="Gartemann K.H."/>
            <person name="Linke B."/>
            <person name="Goesmann A."/>
            <person name="Puhler A."/>
            <person name="Shukla S.K."/>
            <person name="Tauch A."/>
        </authorList>
    </citation>
    <scope>NUCLEOTIDE SEQUENCE [LARGE SCALE GENOMIC DNA]</scope>
    <source>
        <strain>ATCC 700975 / DSM 44827 / CIP 107346 / CN-1</strain>
    </source>
</reference>
<sequence>MSENEIKGILGTKLGMTQVFDEENRVVPVTVVEAGPCVVTQIRTKETDGYNAIQIAFGEKDPRKVNKPATGHFKKAGVTPRRYVAEIRMDDTSAYEVGQEVKVDIFEGVSFVDVTGTTKGHGYAGAMKRHGFAGQGAAHGNQAAHRRVGGIGGASFPGRVFKGKRMAGRMGQDRVTTQNLKIQKIDAESNLLLIKGAIPGARGGLVTVKTAVKGGAHA</sequence>